<name>SYE1_RICCK</name>
<reference key="1">
    <citation type="submission" date="2007-09" db="EMBL/GenBank/DDBJ databases">
        <title>Complete genome sequence of Rickettsia canadensis.</title>
        <authorList>
            <person name="Madan A."/>
            <person name="Fahey J."/>
            <person name="Helton E."/>
            <person name="Ketteman M."/>
            <person name="Madan A."/>
            <person name="Rodrigues S."/>
            <person name="Sanchez A."/>
            <person name="Whiting M."/>
            <person name="Dasch G."/>
            <person name="Eremeeva M."/>
        </authorList>
    </citation>
    <scope>NUCLEOTIDE SEQUENCE [LARGE SCALE GENOMIC DNA]</scope>
    <source>
        <strain>McKiel</strain>
    </source>
</reference>
<dbReference type="EC" id="6.1.1.17" evidence="1"/>
<dbReference type="EMBL" id="CP000409">
    <property type="protein sequence ID" value="ABV73272.1"/>
    <property type="molecule type" value="Genomic_DNA"/>
</dbReference>
<dbReference type="RefSeq" id="WP_012148471.1">
    <property type="nucleotide sequence ID" value="NC_009879.1"/>
</dbReference>
<dbReference type="SMR" id="A8EY39"/>
<dbReference type="STRING" id="293613.A1E_01635"/>
<dbReference type="KEGG" id="rcm:A1E_01635"/>
<dbReference type="eggNOG" id="COG0008">
    <property type="taxonomic scope" value="Bacteria"/>
</dbReference>
<dbReference type="HOGENOM" id="CLU_015768_6_3_5"/>
<dbReference type="Proteomes" id="UP000007056">
    <property type="component" value="Chromosome"/>
</dbReference>
<dbReference type="GO" id="GO:0005829">
    <property type="term" value="C:cytosol"/>
    <property type="evidence" value="ECO:0007669"/>
    <property type="project" value="TreeGrafter"/>
</dbReference>
<dbReference type="GO" id="GO:0005524">
    <property type="term" value="F:ATP binding"/>
    <property type="evidence" value="ECO:0007669"/>
    <property type="project" value="UniProtKB-UniRule"/>
</dbReference>
<dbReference type="GO" id="GO:0004818">
    <property type="term" value="F:glutamate-tRNA ligase activity"/>
    <property type="evidence" value="ECO:0007669"/>
    <property type="project" value="UniProtKB-UniRule"/>
</dbReference>
<dbReference type="GO" id="GO:0000049">
    <property type="term" value="F:tRNA binding"/>
    <property type="evidence" value="ECO:0007669"/>
    <property type="project" value="InterPro"/>
</dbReference>
<dbReference type="GO" id="GO:0008270">
    <property type="term" value="F:zinc ion binding"/>
    <property type="evidence" value="ECO:0007669"/>
    <property type="project" value="InterPro"/>
</dbReference>
<dbReference type="GO" id="GO:0006424">
    <property type="term" value="P:glutamyl-tRNA aminoacylation"/>
    <property type="evidence" value="ECO:0007669"/>
    <property type="project" value="UniProtKB-UniRule"/>
</dbReference>
<dbReference type="CDD" id="cd00808">
    <property type="entry name" value="GluRS_core"/>
    <property type="match status" value="1"/>
</dbReference>
<dbReference type="FunFam" id="3.40.50.620:FF:000007">
    <property type="entry name" value="Glutamate--tRNA ligase"/>
    <property type="match status" value="1"/>
</dbReference>
<dbReference type="Gene3D" id="1.10.10.350">
    <property type="match status" value="1"/>
</dbReference>
<dbReference type="Gene3D" id="3.40.50.620">
    <property type="entry name" value="HUPs"/>
    <property type="match status" value="1"/>
</dbReference>
<dbReference type="HAMAP" id="MF_00022">
    <property type="entry name" value="Glu_tRNA_synth_type1"/>
    <property type="match status" value="1"/>
</dbReference>
<dbReference type="InterPro" id="IPR045462">
    <property type="entry name" value="aa-tRNA-synth_I_cd-bd"/>
</dbReference>
<dbReference type="InterPro" id="IPR020751">
    <property type="entry name" value="aa-tRNA-synth_I_codon-bd_sub2"/>
</dbReference>
<dbReference type="InterPro" id="IPR008925">
    <property type="entry name" value="aa_tRNA-synth_I_cd-bd_sf"/>
</dbReference>
<dbReference type="InterPro" id="IPR004527">
    <property type="entry name" value="Glu-tRNA-ligase_bac/mito"/>
</dbReference>
<dbReference type="InterPro" id="IPR000924">
    <property type="entry name" value="Glu/Gln-tRNA-synth"/>
</dbReference>
<dbReference type="InterPro" id="IPR020058">
    <property type="entry name" value="Glu/Gln-tRNA-synth_Ib_cat-dom"/>
</dbReference>
<dbReference type="InterPro" id="IPR049940">
    <property type="entry name" value="GluQ/Sye"/>
</dbReference>
<dbReference type="InterPro" id="IPR033910">
    <property type="entry name" value="GluRS_core"/>
</dbReference>
<dbReference type="InterPro" id="IPR014729">
    <property type="entry name" value="Rossmann-like_a/b/a_fold"/>
</dbReference>
<dbReference type="NCBIfam" id="TIGR00464">
    <property type="entry name" value="gltX_bact"/>
    <property type="match status" value="1"/>
</dbReference>
<dbReference type="PANTHER" id="PTHR43311">
    <property type="entry name" value="GLUTAMATE--TRNA LIGASE"/>
    <property type="match status" value="1"/>
</dbReference>
<dbReference type="PANTHER" id="PTHR43311:SF2">
    <property type="entry name" value="GLUTAMATE--TRNA LIGASE, MITOCHONDRIAL-RELATED"/>
    <property type="match status" value="1"/>
</dbReference>
<dbReference type="Pfam" id="PF19269">
    <property type="entry name" value="Anticodon_2"/>
    <property type="match status" value="1"/>
</dbReference>
<dbReference type="Pfam" id="PF00749">
    <property type="entry name" value="tRNA-synt_1c"/>
    <property type="match status" value="1"/>
</dbReference>
<dbReference type="PRINTS" id="PR00987">
    <property type="entry name" value="TRNASYNTHGLU"/>
</dbReference>
<dbReference type="SUPFAM" id="SSF48163">
    <property type="entry name" value="An anticodon-binding domain of class I aminoacyl-tRNA synthetases"/>
    <property type="match status" value="1"/>
</dbReference>
<dbReference type="SUPFAM" id="SSF52374">
    <property type="entry name" value="Nucleotidylyl transferase"/>
    <property type="match status" value="1"/>
</dbReference>
<protein>
    <recommendedName>
        <fullName evidence="1">Glutamate--tRNA ligase 1</fullName>
        <ecNumber evidence="1">6.1.1.17</ecNumber>
    </recommendedName>
    <alternativeName>
        <fullName evidence="1">Glutamyl-tRNA synthetase 1</fullName>
        <shortName evidence="1">GluRS 1</shortName>
    </alternativeName>
</protein>
<proteinExistence type="inferred from homology"/>
<keyword id="KW-0030">Aminoacyl-tRNA synthetase</keyword>
<keyword id="KW-0067">ATP-binding</keyword>
<keyword id="KW-0963">Cytoplasm</keyword>
<keyword id="KW-0436">Ligase</keyword>
<keyword id="KW-0547">Nucleotide-binding</keyword>
<keyword id="KW-0648">Protein biosynthesis</keyword>
<evidence type="ECO:0000255" key="1">
    <source>
        <dbReference type="HAMAP-Rule" id="MF_00022"/>
    </source>
</evidence>
<feature type="chain" id="PRO_0000367756" description="Glutamate--tRNA ligase 1">
    <location>
        <begin position="1"/>
        <end position="463"/>
    </location>
</feature>
<feature type="short sequence motif" description="'HIGH' region" evidence="1">
    <location>
        <begin position="10"/>
        <end position="20"/>
    </location>
</feature>
<feature type="short sequence motif" description="'KMSKS' region" evidence="1">
    <location>
        <begin position="239"/>
        <end position="243"/>
    </location>
</feature>
<feature type="binding site" evidence="1">
    <location>
        <position position="242"/>
    </location>
    <ligand>
        <name>ATP</name>
        <dbReference type="ChEBI" id="CHEBI:30616"/>
    </ligand>
</feature>
<accession>A8EY39</accession>
<gene>
    <name evidence="1" type="primary">gltX1</name>
    <name type="ordered locus">A1E_01635</name>
</gene>
<sequence>MTNVITRFAPSPTGFLHIGSARTALFNYLFARHHNGKFLLRIEDTDKERSTNEAVEAIFSGLKWLGLDWDGEVIFQSKRNDLYKETALKLLQAGKAYYCFTSQEEIEKQRQKALENKQYFIFNSDWRDKDPAAYPTDIKPVIRLKTPREGSITIRDTLQGDVVIENSHIDDMVLLRSDGTATYMLAVVVDDHDMGITHIIRGDDHLTNAARQIAIYQACGYAVPSMTHIPLIHGADGAKLSKRHGALGVAAYKDMGYLPESVCNYLLRLGWSHGDDEIISMDQAIKWFNLDSLGKSPAKLDFANMNSLNAHYLRLLDNDSATSKTVERLRQNYNVSKQEVIYINQAIRSLLVRSETLLDLVQLAQIYLVDSPIIYKQDAKEIIENCDKDLIKQVIENLNKLKQFDKESVQNKFKEIATHNGLKLNELMKPVRALITGMTASPSVFEIAEILGKENILKRLKII</sequence>
<organism>
    <name type="scientific">Rickettsia canadensis (strain McKiel)</name>
    <dbReference type="NCBI Taxonomy" id="293613"/>
    <lineage>
        <taxon>Bacteria</taxon>
        <taxon>Pseudomonadati</taxon>
        <taxon>Pseudomonadota</taxon>
        <taxon>Alphaproteobacteria</taxon>
        <taxon>Rickettsiales</taxon>
        <taxon>Rickettsiaceae</taxon>
        <taxon>Rickettsieae</taxon>
        <taxon>Rickettsia</taxon>
        <taxon>belli group</taxon>
    </lineage>
</organism>
<comment type="function">
    <text evidence="1">Catalyzes the attachment of glutamate to tRNA(Glu) in a two-step reaction: glutamate is first activated by ATP to form Glu-AMP and then transferred to the acceptor end of tRNA(Glu).</text>
</comment>
<comment type="catalytic activity">
    <reaction evidence="1">
        <text>tRNA(Glu) + L-glutamate + ATP = L-glutamyl-tRNA(Glu) + AMP + diphosphate</text>
        <dbReference type="Rhea" id="RHEA:23540"/>
        <dbReference type="Rhea" id="RHEA-COMP:9663"/>
        <dbReference type="Rhea" id="RHEA-COMP:9680"/>
        <dbReference type="ChEBI" id="CHEBI:29985"/>
        <dbReference type="ChEBI" id="CHEBI:30616"/>
        <dbReference type="ChEBI" id="CHEBI:33019"/>
        <dbReference type="ChEBI" id="CHEBI:78442"/>
        <dbReference type="ChEBI" id="CHEBI:78520"/>
        <dbReference type="ChEBI" id="CHEBI:456215"/>
        <dbReference type="EC" id="6.1.1.17"/>
    </reaction>
</comment>
<comment type="subunit">
    <text evidence="1">Monomer.</text>
</comment>
<comment type="subcellular location">
    <subcellularLocation>
        <location evidence="1">Cytoplasm</location>
    </subcellularLocation>
</comment>
<comment type="similarity">
    <text evidence="1">Belongs to the class-I aminoacyl-tRNA synthetase family. Glutamate--tRNA ligase type 1 subfamily.</text>
</comment>